<organism>
    <name type="scientific">Lactococcus lactis subsp. cremoris (strain MG1363)</name>
    <dbReference type="NCBI Taxonomy" id="416870"/>
    <lineage>
        <taxon>Bacteria</taxon>
        <taxon>Bacillati</taxon>
        <taxon>Bacillota</taxon>
        <taxon>Bacilli</taxon>
        <taxon>Lactobacillales</taxon>
        <taxon>Streptococcaceae</taxon>
        <taxon>Lactococcus</taxon>
        <taxon>Lactococcus cremoris subsp. cremoris</taxon>
    </lineage>
</organism>
<reference key="1">
    <citation type="journal article" date="2007" name="J. Bacteriol.">
        <title>The complete genome sequence of the lactic acid bacterial paradigm Lactococcus lactis subsp. cremoris MG1363.</title>
        <authorList>
            <person name="Wegmann U."/>
            <person name="O'Connell-Motherway M."/>
            <person name="Zomer A."/>
            <person name="Buist G."/>
            <person name="Shearman C."/>
            <person name="Canchaya C."/>
            <person name="Ventura M."/>
            <person name="Goesmann A."/>
            <person name="Gasson M.J."/>
            <person name="Kuipers O.P."/>
            <person name="van Sinderen D."/>
            <person name="Kok J."/>
        </authorList>
    </citation>
    <scope>NUCLEOTIDE SEQUENCE [LARGE SCALE GENOMIC DNA]</scope>
    <source>
        <strain>MG1363</strain>
    </source>
</reference>
<gene>
    <name evidence="1" type="primary">ldh</name>
    <name type="synonym">ldhB</name>
    <name type="ordered locus">llmg_0392</name>
</gene>
<feature type="chain" id="PRO_0000285235" description="L-lactate dehydrogenase">
    <location>
        <begin position="1"/>
        <end position="314"/>
    </location>
</feature>
<feature type="active site" description="Proton acceptor" evidence="1">
    <location>
        <position position="178"/>
    </location>
</feature>
<feature type="binding site" evidence="1">
    <location>
        <position position="16"/>
    </location>
    <ligand>
        <name>NAD(+)</name>
        <dbReference type="ChEBI" id="CHEBI:57540"/>
    </ligand>
</feature>
<feature type="binding site" evidence="1">
    <location>
        <position position="37"/>
    </location>
    <ligand>
        <name>NAD(+)</name>
        <dbReference type="ChEBI" id="CHEBI:57540"/>
    </ligand>
</feature>
<feature type="binding site" evidence="1">
    <location>
        <position position="42"/>
    </location>
    <ligand>
        <name>NAD(+)</name>
        <dbReference type="ChEBI" id="CHEBI:57540"/>
    </ligand>
</feature>
<feature type="binding site" evidence="1">
    <location>
        <position position="68"/>
    </location>
    <ligand>
        <name>NAD(+)</name>
        <dbReference type="ChEBI" id="CHEBI:57540"/>
    </ligand>
</feature>
<feature type="binding site" evidence="1">
    <location>
        <begin position="82"/>
        <end position="83"/>
    </location>
    <ligand>
        <name>NAD(+)</name>
        <dbReference type="ChEBI" id="CHEBI:57540"/>
    </ligand>
</feature>
<feature type="binding site" evidence="1">
    <location>
        <position position="85"/>
    </location>
    <ligand>
        <name>substrate</name>
    </ligand>
</feature>
<feature type="binding site" evidence="1">
    <location>
        <position position="91"/>
    </location>
    <ligand>
        <name>substrate</name>
    </ligand>
</feature>
<feature type="binding site" evidence="1">
    <location>
        <position position="104"/>
    </location>
    <ligand>
        <name>NAD(+)</name>
        <dbReference type="ChEBI" id="CHEBI:57540"/>
    </ligand>
</feature>
<feature type="binding site" evidence="1">
    <location>
        <begin position="121"/>
        <end position="123"/>
    </location>
    <ligand>
        <name>NAD(+)</name>
        <dbReference type="ChEBI" id="CHEBI:57540"/>
    </ligand>
</feature>
<feature type="binding site" evidence="1">
    <location>
        <begin position="123"/>
        <end position="126"/>
    </location>
    <ligand>
        <name>substrate</name>
    </ligand>
</feature>
<feature type="binding site" evidence="1">
    <location>
        <position position="146"/>
    </location>
    <ligand>
        <name>NAD(+)</name>
        <dbReference type="ChEBI" id="CHEBI:57540"/>
    </ligand>
</feature>
<feature type="binding site" evidence="1">
    <location>
        <begin position="151"/>
        <end position="154"/>
    </location>
    <ligand>
        <name>substrate</name>
    </ligand>
</feature>
<feature type="binding site" evidence="1">
    <location>
        <position position="156"/>
    </location>
    <ligand>
        <name>beta-D-fructose 1,6-bisphosphate</name>
        <dbReference type="ChEBI" id="CHEBI:32966"/>
        <note>allosteric activator</note>
    </ligand>
</feature>
<feature type="binding site" evidence="1">
    <location>
        <position position="171"/>
    </location>
    <ligand>
        <name>beta-D-fructose 1,6-bisphosphate</name>
        <dbReference type="ChEBI" id="CHEBI:32966"/>
        <note>allosteric activator</note>
    </ligand>
</feature>
<feature type="binding site" evidence="1">
    <location>
        <position position="232"/>
    </location>
    <ligand>
        <name>substrate</name>
    </ligand>
</feature>
<feature type="modified residue" description="Phosphotyrosine" evidence="1">
    <location>
        <position position="223"/>
    </location>
</feature>
<sequence length="314" mass="34398">MKITSRKVVVIGTGFVGTSIAYSMINQGLVNELVLIDVNQDKAEGEALDLLDGISWAQENVIVRAGNYKDCENADIVVITAGVNQKPGQSRLDLVNTNAKIMRSIVTQVMDSGFDGIFVIASNPVDILTYVAWETSGLDQSRIVGTGTTLDTTRFRKELATKLEIDPRSVHGYIIGEHGDSEVAVWSHTTIGGKPILEFIVKNKKIGLEDLSNLSNKVKNAAYEIIDKKQATYYGIGMSTARIVKAILNNEQVILPVSAYLRGEYGQEGVFTGVPSVVNQNGVREIIELNIDAYEMKQFEKSVSQLKEVIESIK</sequence>
<proteinExistence type="inferred from homology"/>
<dbReference type="EC" id="1.1.1.27" evidence="1"/>
<dbReference type="EMBL" id="AM406671">
    <property type="protein sequence ID" value="CAL96997.1"/>
    <property type="molecule type" value="Genomic_DNA"/>
</dbReference>
<dbReference type="RefSeq" id="WP_011834445.1">
    <property type="nucleotide sequence ID" value="NC_009004.1"/>
</dbReference>
<dbReference type="SMR" id="P0CI34"/>
<dbReference type="STRING" id="416870.llmg_0392"/>
<dbReference type="KEGG" id="llm:llmg_0392"/>
<dbReference type="eggNOG" id="COG0039">
    <property type="taxonomic scope" value="Bacteria"/>
</dbReference>
<dbReference type="HOGENOM" id="CLU_045401_1_1_9"/>
<dbReference type="OrthoDB" id="9802969at2"/>
<dbReference type="PhylomeDB" id="P0CI34"/>
<dbReference type="SABIO-RK" id="P0CI34"/>
<dbReference type="UniPathway" id="UPA00554">
    <property type="reaction ID" value="UER00611"/>
</dbReference>
<dbReference type="Proteomes" id="UP000000364">
    <property type="component" value="Chromosome"/>
</dbReference>
<dbReference type="GO" id="GO:0005737">
    <property type="term" value="C:cytoplasm"/>
    <property type="evidence" value="ECO:0007669"/>
    <property type="project" value="UniProtKB-SubCell"/>
</dbReference>
<dbReference type="GO" id="GO:0004459">
    <property type="term" value="F:L-lactate dehydrogenase activity"/>
    <property type="evidence" value="ECO:0007669"/>
    <property type="project" value="UniProtKB-UniRule"/>
</dbReference>
<dbReference type="GO" id="GO:0006096">
    <property type="term" value="P:glycolytic process"/>
    <property type="evidence" value="ECO:0007669"/>
    <property type="project" value="UniProtKB-UniRule"/>
</dbReference>
<dbReference type="GO" id="GO:0006089">
    <property type="term" value="P:lactate metabolic process"/>
    <property type="evidence" value="ECO:0007669"/>
    <property type="project" value="TreeGrafter"/>
</dbReference>
<dbReference type="CDD" id="cd05291">
    <property type="entry name" value="HicDH_like"/>
    <property type="match status" value="1"/>
</dbReference>
<dbReference type="FunFam" id="3.40.50.720:FF:000018">
    <property type="entry name" value="Malate dehydrogenase"/>
    <property type="match status" value="1"/>
</dbReference>
<dbReference type="Gene3D" id="3.90.110.10">
    <property type="entry name" value="Lactate dehydrogenase/glycoside hydrolase, family 4, C-terminal"/>
    <property type="match status" value="1"/>
</dbReference>
<dbReference type="Gene3D" id="3.40.50.720">
    <property type="entry name" value="NAD(P)-binding Rossmann-like Domain"/>
    <property type="match status" value="1"/>
</dbReference>
<dbReference type="HAMAP" id="MF_00488">
    <property type="entry name" value="Lactate_dehydrog"/>
    <property type="match status" value="1"/>
</dbReference>
<dbReference type="InterPro" id="IPR001557">
    <property type="entry name" value="L-lactate/malate_DH"/>
</dbReference>
<dbReference type="InterPro" id="IPR011304">
    <property type="entry name" value="L-lactate_DH"/>
</dbReference>
<dbReference type="InterPro" id="IPR018177">
    <property type="entry name" value="L-lactate_DH_AS"/>
</dbReference>
<dbReference type="InterPro" id="IPR022383">
    <property type="entry name" value="Lactate/malate_DH_C"/>
</dbReference>
<dbReference type="InterPro" id="IPR001236">
    <property type="entry name" value="Lactate/malate_DH_N"/>
</dbReference>
<dbReference type="InterPro" id="IPR015955">
    <property type="entry name" value="Lactate_DH/Glyco_Ohase_4_C"/>
</dbReference>
<dbReference type="InterPro" id="IPR036291">
    <property type="entry name" value="NAD(P)-bd_dom_sf"/>
</dbReference>
<dbReference type="NCBIfam" id="TIGR01771">
    <property type="entry name" value="L-LDH-NAD"/>
    <property type="match status" value="1"/>
</dbReference>
<dbReference type="NCBIfam" id="NF000824">
    <property type="entry name" value="PRK00066.1"/>
    <property type="match status" value="1"/>
</dbReference>
<dbReference type="NCBIfam" id="NF004863">
    <property type="entry name" value="PRK06223.1"/>
    <property type="match status" value="1"/>
</dbReference>
<dbReference type="PANTHER" id="PTHR43128">
    <property type="entry name" value="L-2-HYDROXYCARBOXYLATE DEHYDROGENASE (NAD(P)(+))"/>
    <property type="match status" value="1"/>
</dbReference>
<dbReference type="PANTHER" id="PTHR43128:SF16">
    <property type="entry name" value="L-LACTATE DEHYDROGENASE"/>
    <property type="match status" value="1"/>
</dbReference>
<dbReference type="Pfam" id="PF02866">
    <property type="entry name" value="Ldh_1_C"/>
    <property type="match status" value="1"/>
</dbReference>
<dbReference type="Pfam" id="PF00056">
    <property type="entry name" value="Ldh_1_N"/>
    <property type="match status" value="1"/>
</dbReference>
<dbReference type="PIRSF" id="PIRSF000102">
    <property type="entry name" value="Lac_mal_DH"/>
    <property type="match status" value="1"/>
</dbReference>
<dbReference type="PRINTS" id="PR00086">
    <property type="entry name" value="LLDHDRGNASE"/>
</dbReference>
<dbReference type="SUPFAM" id="SSF56327">
    <property type="entry name" value="LDH C-terminal domain-like"/>
    <property type="match status" value="1"/>
</dbReference>
<dbReference type="SUPFAM" id="SSF51735">
    <property type="entry name" value="NAD(P)-binding Rossmann-fold domains"/>
    <property type="match status" value="1"/>
</dbReference>
<dbReference type="PROSITE" id="PS00064">
    <property type="entry name" value="L_LDH"/>
    <property type="match status" value="1"/>
</dbReference>
<name>LDH_LACLM</name>
<keyword id="KW-0021">Allosteric enzyme</keyword>
<keyword id="KW-0963">Cytoplasm</keyword>
<keyword id="KW-0520">NAD</keyword>
<keyword id="KW-0560">Oxidoreductase</keyword>
<keyword id="KW-0597">Phosphoprotein</keyword>
<comment type="function">
    <text evidence="1">Catalyzes the conversion of lactate to pyruvate.</text>
</comment>
<comment type="catalytic activity">
    <reaction evidence="1">
        <text>(S)-lactate + NAD(+) = pyruvate + NADH + H(+)</text>
        <dbReference type="Rhea" id="RHEA:23444"/>
        <dbReference type="ChEBI" id="CHEBI:15361"/>
        <dbReference type="ChEBI" id="CHEBI:15378"/>
        <dbReference type="ChEBI" id="CHEBI:16651"/>
        <dbReference type="ChEBI" id="CHEBI:57540"/>
        <dbReference type="ChEBI" id="CHEBI:57945"/>
        <dbReference type="EC" id="1.1.1.27"/>
    </reaction>
</comment>
<comment type="activity regulation">
    <text evidence="1">Allosterically activated by fructose 1,6-bisphosphate (FBP).</text>
</comment>
<comment type="pathway">
    <text evidence="1">Fermentation; pyruvate fermentation to lactate; (S)-lactate from pyruvate: step 1/1.</text>
</comment>
<comment type="subunit">
    <text evidence="1">Homotetramer.</text>
</comment>
<comment type="subcellular location">
    <subcellularLocation>
        <location evidence="1">Cytoplasm</location>
    </subcellularLocation>
</comment>
<comment type="similarity">
    <text evidence="1">Belongs to the LDH/MDH superfamily. LDH family.</text>
</comment>
<protein>
    <recommendedName>
        <fullName evidence="1">L-lactate dehydrogenase</fullName>
        <shortName evidence="1">L-LDH</shortName>
        <ecNumber evidence="1">1.1.1.27</ecNumber>
    </recommendedName>
</protein>
<accession>P0CI34</accession>
<accession>A2RIA3</accession>
<accession>Q7WYP6</accession>
<evidence type="ECO:0000255" key="1">
    <source>
        <dbReference type="HAMAP-Rule" id="MF_00488"/>
    </source>
</evidence>